<reference key="1">
    <citation type="journal article" date="2004" name="Genome Res.">
        <title>The status, quality, and expansion of the NIH full-length cDNA project: the Mammalian Gene Collection (MGC).</title>
        <authorList>
            <consortium name="The MGC Project Team"/>
        </authorList>
    </citation>
    <scope>NUCLEOTIDE SEQUENCE [LARGE SCALE MRNA]</scope>
    <source>
        <tissue>Placenta</tissue>
    </source>
</reference>
<comment type="subunit">
    <text evidence="1">Probably interacts with SEMA5A.</text>
</comment>
<comment type="subcellular location">
    <subcellularLocation>
        <location evidence="4">Cytoplasm</location>
    </subcellularLocation>
</comment>
<comment type="similarity">
    <text evidence="4">Belongs to the GIPC family.</text>
</comment>
<dbReference type="EMBL" id="BC100257">
    <property type="protein sequence ID" value="AAI00258.1"/>
    <property type="molecule type" value="mRNA"/>
</dbReference>
<dbReference type="RefSeq" id="NP_001032287.1">
    <property type="nucleotide sequence ID" value="NM_001037210.1"/>
</dbReference>
<dbReference type="SMR" id="Q498D9"/>
<dbReference type="FunCoup" id="Q498D9">
    <property type="interactions" value="207"/>
</dbReference>
<dbReference type="STRING" id="10116.ENSRNOP00000063118"/>
<dbReference type="PhosphoSitePlus" id="Q498D9"/>
<dbReference type="PaxDb" id="10116-ENSRNOP00000063118"/>
<dbReference type="Ensembl" id="ENSRNOT00000065811.4">
    <property type="protein sequence ID" value="ENSRNOP00000063118.4"/>
    <property type="gene ID" value="ENSRNOG00000042152.4"/>
</dbReference>
<dbReference type="GeneID" id="365960"/>
<dbReference type="KEGG" id="rno:365960"/>
<dbReference type="AGR" id="RGD:1560751"/>
<dbReference type="CTD" id="54810"/>
<dbReference type="RGD" id="1560751">
    <property type="gene designation" value="Gipc2"/>
</dbReference>
<dbReference type="eggNOG" id="KOG3938">
    <property type="taxonomic scope" value="Eukaryota"/>
</dbReference>
<dbReference type="GeneTree" id="ENSGT00390000003420"/>
<dbReference type="InParanoid" id="Q498D9"/>
<dbReference type="OMA" id="VGWRHYE"/>
<dbReference type="OrthoDB" id="6509831at2759"/>
<dbReference type="PhylomeDB" id="Q498D9"/>
<dbReference type="PRO" id="PR:Q498D9"/>
<dbReference type="Proteomes" id="UP000002494">
    <property type="component" value="Chromosome 2"/>
</dbReference>
<dbReference type="GO" id="GO:0005737">
    <property type="term" value="C:cytoplasm"/>
    <property type="evidence" value="ECO:0007669"/>
    <property type="project" value="UniProtKB-SubCell"/>
</dbReference>
<dbReference type="GO" id="GO:0042802">
    <property type="term" value="F:identical protein binding"/>
    <property type="evidence" value="ECO:0000266"/>
    <property type="project" value="RGD"/>
</dbReference>
<dbReference type="CDD" id="cd21180">
    <property type="entry name" value="GH2_GIPC"/>
    <property type="match status" value="1"/>
</dbReference>
<dbReference type="CDD" id="cd23078">
    <property type="entry name" value="PDZ_GIPC2"/>
    <property type="match status" value="1"/>
</dbReference>
<dbReference type="FunFam" id="2.30.42.10:FF:000097">
    <property type="entry name" value="PDZ domain-containing protein GIPC1 isoform 1"/>
    <property type="match status" value="1"/>
</dbReference>
<dbReference type="Gene3D" id="2.30.42.10">
    <property type="match status" value="1"/>
</dbReference>
<dbReference type="InterPro" id="IPR055349">
    <property type="entry name" value="GH2_GIPC"/>
</dbReference>
<dbReference type="InterPro" id="IPR056814">
    <property type="entry name" value="GIPC1-3_GH1"/>
</dbReference>
<dbReference type="InterPro" id="IPR017379">
    <property type="entry name" value="GIPC1/2/3"/>
</dbReference>
<dbReference type="InterPro" id="IPR001478">
    <property type="entry name" value="PDZ"/>
</dbReference>
<dbReference type="InterPro" id="IPR036034">
    <property type="entry name" value="PDZ_sf"/>
</dbReference>
<dbReference type="PANTHER" id="PTHR12259:SF3">
    <property type="entry name" value="PDZ DOMAIN-CONTAINING PROTEIN GIPC2"/>
    <property type="match status" value="1"/>
</dbReference>
<dbReference type="PANTHER" id="PTHR12259">
    <property type="entry name" value="RGS-GAIP INTERACTING PROTEIN GIPC"/>
    <property type="match status" value="1"/>
</dbReference>
<dbReference type="Pfam" id="PF25083">
    <property type="entry name" value="GIPC1_GH1"/>
    <property type="match status" value="1"/>
</dbReference>
<dbReference type="Pfam" id="PF25082">
    <property type="entry name" value="GIPC1_GH2"/>
    <property type="match status" value="1"/>
</dbReference>
<dbReference type="Pfam" id="PF00595">
    <property type="entry name" value="PDZ"/>
    <property type="match status" value="1"/>
</dbReference>
<dbReference type="PIRSF" id="PIRSF038083">
    <property type="entry name" value="UCP038083_GIPC"/>
    <property type="match status" value="1"/>
</dbReference>
<dbReference type="SMART" id="SM00228">
    <property type="entry name" value="PDZ"/>
    <property type="match status" value="1"/>
</dbReference>
<dbReference type="SUPFAM" id="SSF50156">
    <property type="entry name" value="PDZ domain-like"/>
    <property type="match status" value="1"/>
</dbReference>
<dbReference type="PROSITE" id="PS50106">
    <property type="entry name" value="PDZ"/>
    <property type="match status" value="1"/>
</dbReference>
<feature type="chain" id="PRO_0000247190" description="PDZ domain-containing protein GIPC2">
    <location>
        <begin position="1"/>
        <end position="314"/>
    </location>
</feature>
<feature type="domain" description="PDZ" evidence="2">
    <location>
        <begin position="117"/>
        <end position="197"/>
    </location>
</feature>
<feature type="region of interest" description="Disordered" evidence="3">
    <location>
        <begin position="1"/>
        <end position="36"/>
    </location>
</feature>
<feature type="compositionally biased region" description="Basic residues" evidence="3">
    <location>
        <begin position="1"/>
        <end position="12"/>
    </location>
</feature>
<feature type="compositionally biased region" description="Basic and acidic residues" evidence="3">
    <location>
        <begin position="13"/>
        <end position="25"/>
    </location>
</feature>
<evidence type="ECO:0000250" key="1"/>
<evidence type="ECO:0000255" key="2">
    <source>
        <dbReference type="PROSITE-ProRule" id="PRU00143"/>
    </source>
</evidence>
<evidence type="ECO:0000256" key="3">
    <source>
        <dbReference type="SAM" id="MobiDB-lite"/>
    </source>
</evidence>
<evidence type="ECO:0000305" key="4"/>
<protein>
    <recommendedName>
        <fullName>PDZ domain-containing protein GIPC2</fullName>
    </recommendedName>
</protein>
<accession>Q498D9</accession>
<sequence>MPLGLRGKKKAAKSKETARLVEGERSGGSQGVPGPPAPARRLVFHAQLAHGSATGRVEDFSSISELYAKIAGVFEIAPSEILFCTLNTPKIDMGKLLGGQLGLEDFIFAHVKGIKKEVNVYKSEDSLGLTITDNGVGYAFIKRIKDGSTIDSVKTICVGDHIECINGENIVGWRHFEVAKKLKELKKEELFTLQLIEPKKAFEIGPRSKAGKTSTEKIGTSRGTLRLRSKGPATVEDLPSEAKAKAIEKVDDLLELYMGIRDIDLATTMFEAGKDKSNPDEFAVALDETLGDFAFPDEFMFDVWGAISDVKQGR</sequence>
<proteinExistence type="evidence at transcript level"/>
<name>GIPC2_RAT</name>
<gene>
    <name type="primary">Gipc2</name>
</gene>
<organism>
    <name type="scientific">Rattus norvegicus</name>
    <name type="common">Rat</name>
    <dbReference type="NCBI Taxonomy" id="10116"/>
    <lineage>
        <taxon>Eukaryota</taxon>
        <taxon>Metazoa</taxon>
        <taxon>Chordata</taxon>
        <taxon>Craniata</taxon>
        <taxon>Vertebrata</taxon>
        <taxon>Euteleostomi</taxon>
        <taxon>Mammalia</taxon>
        <taxon>Eutheria</taxon>
        <taxon>Euarchontoglires</taxon>
        <taxon>Glires</taxon>
        <taxon>Rodentia</taxon>
        <taxon>Myomorpha</taxon>
        <taxon>Muroidea</taxon>
        <taxon>Muridae</taxon>
        <taxon>Murinae</taxon>
        <taxon>Rattus</taxon>
    </lineage>
</organism>
<keyword id="KW-0963">Cytoplasm</keyword>
<keyword id="KW-1185">Reference proteome</keyword>